<keyword id="KW-0067">ATP-binding</keyword>
<keyword id="KW-0963">Cytoplasm</keyword>
<keyword id="KW-0227">DNA damage</keyword>
<keyword id="KW-0233">DNA recombination</keyword>
<keyword id="KW-0234">DNA repair</keyword>
<keyword id="KW-0238">DNA-binding</keyword>
<keyword id="KW-0547">Nucleotide-binding</keyword>
<keyword id="KW-0742">SOS response</keyword>
<accession>Q3AMM5</accession>
<name>RECA_SYNSC</name>
<evidence type="ECO:0000255" key="1">
    <source>
        <dbReference type="HAMAP-Rule" id="MF_00268"/>
    </source>
</evidence>
<evidence type="ECO:0000256" key="2">
    <source>
        <dbReference type="SAM" id="MobiDB-lite"/>
    </source>
</evidence>
<sequence>MPADMKSGASDPRPSGERDKALNLVLGQIERNFGKGSIMRLGDASRMRVETISTGALTLDLALGGGYPKGRVVEIYGPESSGKTTLTLHAIAEVQKRGGVAAFVDAEHALDPVYAASLGVDVENLLVSQPDTGEMALEIVDQLVRSAAVDLVVVDSVAALTPRAEIEGEMGDLAVGAQARLMSQAMRKITGNIGKSGCTVIFLNQLRLKIGVTYGNPETTTGGNALKFYASVRLDIRRIQTLKKGTEEFGIRAKVKVAKNKVAPPFRIAEFDILFGRGISTLGCLLDLAEETGVVVRKGAWYSYEGDNIGQGRDNTISWMEENPDATATIETLVRQKLTEGSEVKANSMRPLAAAAKTAAADKSAPAKASEAAA</sequence>
<organism>
    <name type="scientific">Synechococcus sp. (strain CC9605)</name>
    <dbReference type="NCBI Taxonomy" id="110662"/>
    <lineage>
        <taxon>Bacteria</taxon>
        <taxon>Bacillati</taxon>
        <taxon>Cyanobacteriota</taxon>
        <taxon>Cyanophyceae</taxon>
        <taxon>Synechococcales</taxon>
        <taxon>Synechococcaceae</taxon>
        <taxon>Synechococcus</taxon>
    </lineage>
</organism>
<gene>
    <name evidence="1" type="primary">recA</name>
    <name type="ordered locus">Syncc9605_0381</name>
</gene>
<protein>
    <recommendedName>
        <fullName evidence="1">Protein RecA</fullName>
    </recommendedName>
    <alternativeName>
        <fullName evidence="1">Recombinase A</fullName>
    </alternativeName>
</protein>
<proteinExistence type="inferred from homology"/>
<feature type="chain" id="PRO_1000048026" description="Protein RecA">
    <location>
        <begin position="1"/>
        <end position="374"/>
    </location>
</feature>
<feature type="region of interest" description="Disordered" evidence="2">
    <location>
        <begin position="355"/>
        <end position="374"/>
    </location>
</feature>
<feature type="binding site" evidence="1">
    <location>
        <begin position="77"/>
        <end position="84"/>
    </location>
    <ligand>
        <name>ATP</name>
        <dbReference type="ChEBI" id="CHEBI:30616"/>
    </ligand>
</feature>
<comment type="function">
    <text evidence="1">Can catalyze the hydrolysis of ATP in the presence of single-stranded DNA, the ATP-dependent uptake of single-stranded DNA by duplex DNA, and the ATP-dependent hybridization of homologous single-stranded DNAs. It interacts with LexA causing its activation and leading to its autocatalytic cleavage.</text>
</comment>
<comment type="subcellular location">
    <subcellularLocation>
        <location evidence="1">Cytoplasm</location>
    </subcellularLocation>
</comment>
<comment type="similarity">
    <text evidence="1">Belongs to the RecA family.</text>
</comment>
<reference key="1">
    <citation type="submission" date="2005-07" db="EMBL/GenBank/DDBJ databases">
        <title>Complete sequence of Synechococcus sp. CC9605.</title>
        <authorList>
            <consortium name="US DOE Joint Genome Institute"/>
            <person name="Copeland A."/>
            <person name="Lucas S."/>
            <person name="Lapidus A."/>
            <person name="Barry K."/>
            <person name="Detter J.C."/>
            <person name="Glavina T."/>
            <person name="Hammon N."/>
            <person name="Israni S."/>
            <person name="Pitluck S."/>
            <person name="Schmutz J."/>
            <person name="Martinez M."/>
            <person name="Larimer F."/>
            <person name="Land M."/>
            <person name="Kyrpides N."/>
            <person name="Ivanova N."/>
            <person name="Richardson P."/>
        </authorList>
    </citation>
    <scope>NUCLEOTIDE SEQUENCE [LARGE SCALE GENOMIC DNA]</scope>
    <source>
        <strain>CC9605</strain>
    </source>
</reference>
<dbReference type="EMBL" id="CP000110">
    <property type="protein sequence ID" value="ABB34157.1"/>
    <property type="molecule type" value="Genomic_DNA"/>
</dbReference>
<dbReference type="RefSeq" id="WP_011363394.1">
    <property type="nucleotide sequence ID" value="NC_007516.1"/>
</dbReference>
<dbReference type="SMR" id="Q3AMM5"/>
<dbReference type="STRING" id="110662.Syncc9605_0381"/>
<dbReference type="KEGG" id="syd:Syncc9605_0381"/>
<dbReference type="eggNOG" id="COG0468">
    <property type="taxonomic scope" value="Bacteria"/>
</dbReference>
<dbReference type="HOGENOM" id="CLU_040469_3_2_3"/>
<dbReference type="OrthoDB" id="9776733at2"/>
<dbReference type="GO" id="GO:0005829">
    <property type="term" value="C:cytosol"/>
    <property type="evidence" value="ECO:0007669"/>
    <property type="project" value="TreeGrafter"/>
</dbReference>
<dbReference type="GO" id="GO:0005524">
    <property type="term" value="F:ATP binding"/>
    <property type="evidence" value="ECO:0007669"/>
    <property type="project" value="UniProtKB-UniRule"/>
</dbReference>
<dbReference type="GO" id="GO:0016887">
    <property type="term" value="F:ATP hydrolysis activity"/>
    <property type="evidence" value="ECO:0007669"/>
    <property type="project" value="InterPro"/>
</dbReference>
<dbReference type="GO" id="GO:0140664">
    <property type="term" value="F:ATP-dependent DNA damage sensor activity"/>
    <property type="evidence" value="ECO:0007669"/>
    <property type="project" value="InterPro"/>
</dbReference>
<dbReference type="GO" id="GO:0003684">
    <property type="term" value="F:damaged DNA binding"/>
    <property type="evidence" value="ECO:0007669"/>
    <property type="project" value="UniProtKB-UniRule"/>
</dbReference>
<dbReference type="GO" id="GO:0003697">
    <property type="term" value="F:single-stranded DNA binding"/>
    <property type="evidence" value="ECO:0007669"/>
    <property type="project" value="UniProtKB-UniRule"/>
</dbReference>
<dbReference type="GO" id="GO:0006310">
    <property type="term" value="P:DNA recombination"/>
    <property type="evidence" value="ECO:0007669"/>
    <property type="project" value="UniProtKB-UniRule"/>
</dbReference>
<dbReference type="GO" id="GO:0006281">
    <property type="term" value="P:DNA repair"/>
    <property type="evidence" value="ECO:0007669"/>
    <property type="project" value="UniProtKB-UniRule"/>
</dbReference>
<dbReference type="GO" id="GO:0009432">
    <property type="term" value="P:SOS response"/>
    <property type="evidence" value="ECO:0007669"/>
    <property type="project" value="UniProtKB-UniRule"/>
</dbReference>
<dbReference type="CDD" id="cd00983">
    <property type="entry name" value="RecA"/>
    <property type="match status" value="1"/>
</dbReference>
<dbReference type="FunFam" id="3.40.50.300:FF:000087">
    <property type="entry name" value="Recombinase RecA"/>
    <property type="match status" value="1"/>
</dbReference>
<dbReference type="Gene3D" id="3.40.50.300">
    <property type="entry name" value="P-loop containing nucleotide triphosphate hydrolases"/>
    <property type="match status" value="1"/>
</dbReference>
<dbReference type="HAMAP" id="MF_00268">
    <property type="entry name" value="RecA"/>
    <property type="match status" value="1"/>
</dbReference>
<dbReference type="InterPro" id="IPR003593">
    <property type="entry name" value="AAA+_ATPase"/>
</dbReference>
<dbReference type="InterPro" id="IPR013765">
    <property type="entry name" value="DNA_recomb/repair_RecA"/>
</dbReference>
<dbReference type="InterPro" id="IPR020584">
    <property type="entry name" value="DNA_recomb/repair_RecA_CS"/>
</dbReference>
<dbReference type="InterPro" id="IPR027417">
    <property type="entry name" value="P-loop_NTPase"/>
</dbReference>
<dbReference type="InterPro" id="IPR049261">
    <property type="entry name" value="RecA-like_C"/>
</dbReference>
<dbReference type="InterPro" id="IPR049428">
    <property type="entry name" value="RecA-like_N"/>
</dbReference>
<dbReference type="InterPro" id="IPR020588">
    <property type="entry name" value="RecA_ATP-bd"/>
</dbReference>
<dbReference type="InterPro" id="IPR023400">
    <property type="entry name" value="RecA_C_sf"/>
</dbReference>
<dbReference type="InterPro" id="IPR020587">
    <property type="entry name" value="RecA_monomer-monomer_interface"/>
</dbReference>
<dbReference type="NCBIfam" id="TIGR02012">
    <property type="entry name" value="tigrfam_recA"/>
    <property type="match status" value="1"/>
</dbReference>
<dbReference type="PANTHER" id="PTHR45900:SF1">
    <property type="entry name" value="MITOCHONDRIAL DNA REPAIR PROTEIN RECA HOMOLOG-RELATED"/>
    <property type="match status" value="1"/>
</dbReference>
<dbReference type="PANTHER" id="PTHR45900">
    <property type="entry name" value="RECA"/>
    <property type="match status" value="1"/>
</dbReference>
<dbReference type="Pfam" id="PF00154">
    <property type="entry name" value="RecA"/>
    <property type="match status" value="1"/>
</dbReference>
<dbReference type="Pfam" id="PF21096">
    <property type="entry name" value="RecA_C"/>
    <property type="match status" value="1"/>
</dbReference>
<dbReference type="PRINTS" id="PR00142">
    <property type="entry name" value="RECA"/>
</dbReference>
<dbReference type="SMART" id="SM00382">
    <property type="entry name" value="AAA"/>
    <property type="match status" value="1"/>
</dbReference>
<dbReference type="SUPFAM" id="SSF52540">
    <property type="entry name" value="P-loop containing nucleoside triphosphate hydrolases"/>
    <property type="match status" value="1"/>
</dbReference>
<dbReference type="SUPFAM" id="SSF54752">
    <property type="entry name" value="RecA protein, C-terminal domain"/>
    <property type="match status" value="1"/>
</dbReference>
<dbReference type="PROSITE" id="PS00321">
    <property type="entry name" value="RECA_1"/>
    <property type="match status" value="1"/>
</dbReference>
<dbReference type="PROSITE" id="PS50162">
    <property type="entry name" value="RECA_2"/>
    <property type="match status" value="1"/>
</dbReference>
<dbReference type="PROSITE" id="PS50163">
    <property type="entry name" value="RECA_3"/>
    <property type="match status" value="1"/>
</dbReference>